<sequence>MSDMEDDFMCDDEEDYDLEYSEDSNSEPNVDLENQYYNSKALKEDDPKAALSSFQKVLELEGEKGEWGFKALKQMIKINFKLTNFPEMMNRYKQLLTYIRSAVTRNYSEKSINSILDYISTSKQMDLLQEFYETTLEALKDAKNDRLWFKTNTKLGKLYLEREEYGKLQKILRQLHQSCQTDDGEDDLKKGTQLLEIYALEIQMYTAQKNNKKLKALYEQSLHIKSAIPHPLIMGVIRECGGKMHLREGEFEKAHTDFFEAFKNYDESGSPRRTTCLKYLVLANMLMKSGINPFDSQEAKPYKNDPEILAMTNLVSAYQNNDITEFEKILKTNHSNIMDDPFIREHIEELLRNIRTQVLIKLIKPYTRIHIPFISKELNIDVADVESLLVQCILDNTIHGRIDQVNQLLELDHQKRGGARYTALDKWTNQLNSLNQAVVSKLA</sequence>
<comment type="function">
    <text evidence="7 8 9 10 13">Essential component of the COP9 signalosome complex (CSN), a complex involved in various cellular and developmental processes. The CSN complex is an essential regulator of the ubiquitin (Ubl) conjugation pathway by mediating the deneddylation of the cullin subunits of SCF-type E3 ligase complexes, leading to decrease the Ubl ligase activity of SCF-type complexes such as SCF, CSA or DDB2. The complex is also involved in phosphorylation of p53/TP53, c-jun/JUN, IkappaBalpha/NFKBIA, ITPK1 and IRF8/ICSBP, possibly via its association with CK2 and PKD kinases. CSN-dependent phosphorylation of TP53 and JUN promotes and protects degradation by the Ubl system, respectively. Involved in early stage of neuronal differentiation via its interaction with NIF3L1.</text>
</comment>
<comment type="subunit">
    <text evidence="1 4 5 6 8 11 12">Component of the CSN complex, composed of COPS1/GPS1, COPS2, COPS3, COPS4, COPS5, COPS6, COPS7 (COPS7A or COPS7B), COPS8 and COPS9 isoform 1 (PubMed:11337588, PubMed:18850735, PubMed:26456823). In the complex, it probably interacts directly with COPS1, COPS4, COPS5, COPS6 and COPS7 (COPS7A or COPS7B) (PubMed:11337588, PubMed:18850735). Specifically interacts with the ligand binding domain of the thyroid receptor (TR). Does not require the presence of thyroid hormone for its interaction (By similarity). Interacts with CUL1 and CUL2 (PubMed:11337588). Interacts with IRF8/ICSBP1 and with nuclear receptors NR2F1 and NR0B1 (PubMed:10207062, PubMed:10713076, PubMed:10991940). Interacts with NIF3L1 (By similarity).</text>
</comment>
<comment type="interaction">
    <interactant intactId="EBI-1050386">
        <id>P61201</id>
    </interactant>
    <interactant intactId="EBI-350590">
        <id>Q9UNS2</id>
        <label>COPS3</label>
    </interactant>
    <organismsDiffer>false</organismsDiffer>
    <experiments>13</experiments>
</comment>
<comment type="interaction">
    <interactant intactId="EBI-1050386">
        <id>P61201</id>
    </interactant>
    <interactant intactId="EBI-81215">
        <id>Q92793</id>
        <label>CREBBP</label>
    </interactant>
    <organismsDiffer>false</organismsDiffer>
    <experiments>3</experiments>
</comment>
<comment type="interaction">
    <interactant intactId="EBI-1050386">
        <id>P61201</id>
    </interactant>
    <interactant intactId="EBI-447295">
        <id>Q09472</id>
        <label>EP300</label>
    </interactant>
    <organismsDiffer>false</organismsDiffer>
    <experiments>2</experiments>
</comment>
<comment type="interaction">
    <interactant intactId="EBI-1050386">
        <id>P61201</id>
    </interactant>
    <interactant intactId="EBI-10983983">
        <id>Q13098-7</id>
        <label>GPS1</label>
    </interactant>
    <organismsDiffer>false</organismsDiffer>
    <experiments>5</experiments>
</comment>
<comment type="interaction">
    <interactant intactId="EBI-1050386">
        <id>P61201</id>
    </interactant>
    <interactant intactId="EBI-748312">
        <id>P49821</id>
        <label>NDUFV1</label>
    </interactant>
    <organismsDiffer>false</organismsDiffer>
    <experiments>3</experiments>
</comment>
<comment type="interaction">
    <interactant intactId="EBI-1050386">
        <id>P61201</id>
    </interactant>
    <interactant intactId="EBI-357816">
        <id>O00231</id>
        <label>PSMD11</label>
    </interactant>
    <organismsDiffer>false</organismsDiffer>
    <experiments>3</experiments>
</comment>
<comment type="interaction">
    <interactant intactId="EBI-1050386">
        <id>P61201</id>
    </interactant>
    <interactant intactId="EBI-720609">
        <id>O76024</id>
        <label>WFS1</label>
    </interactant>
    <organismsDiffer>false</organismsDiffer>
    <experiments>3</experiments>
</comment>
<comment type="interaction">
    <interactant intactId="EBI-1050386">
        <id>P61201</id>
    </interactant>
    <interactant intactId="EBI-740232">
        <id>Q9NWS9-2</id>
        <label>ZNF446</label>
    </interactant>
    <organismsDiffer>false</organismsDiffer>
    <experiments>3</experiments>
</comment>
<comment type="interaction">
    <interactant intactId="EBI-1050386">
        <id>P61201</id>
    </interactant>
    <interactant intactId="EBI-296306">
        <id>P45481</id>
        <label>Crebbp</label>
    </interactant>
    <organismsDiffer>true</organismsDiffer>
    <experiments>2</experiments>
</comment>
<comment type="interaction">
    <interactant intactId="EBI-1050386">
        <id>P61201</id>
    </interactant>
    <interactant intactId="EBI-8826488">
        <id>PRO_0000037946</id>
        <dbReference type="UniProtKB" id="P29991"/>
    </interactant>
    <organismsDiffer>true</organismsDiffer>
    <experiments>3</experiments>
</comment>
<comment type="subcellular location">
    <subcellularLocation>
        <location evidence="13">Cytoplasm</location>
    </subcellularLocation>
    <subcellularLocation>
        <location evidence="4">Nucleus</location>
    </subcellularLocation>
</comment>
<comment type="alternative products">
    <event type="alternative splicing"/>
    <isoform>
        <id>P61201-1</id>
        <name>1</name>
        <sequence type="displayed"/>
    </isoform>
    <isoform>
        <id>P61201-2</id>
        <name>2</name>
        <sequence type="described" ref="VSP_011884"/>
    </isoform>
</comment>
<comment type="PTM">
    <text evidence="9">Phosphorylated by CK2 and PKD kinases.</text>
</comment>
<comment type="similarity">
    <text evidence="15">Belongs to the CSN2 family.</text>
</comment>
<comment type="sequence caution" evidence="15">
    <conflict type="frameshift">
        <sequence resource="EMBL-CDS" id="AAD30269"/>
    </conflict>
</comment>
<comment type="online information" name="Atlas of Genetics and Cytogenetics in Oncology and Haematology">
    <link uri="https://atlasgeneticsoncology.org/gene/47362/COPS2"/>
</comment>
<reference key="1">
    <citation type="submission" date="1998-08" db="EMBL/GenBank/DDBJ databases">
        <authorList>
            <person name="Dumdey R."/>
            <person name="Bech-Otschir D."/>
            <person name="Ferrell K."/>
            <person name="Dubiel W."/>
        </authorList>
    </citation>
    <scope>NUCLEOTIDE SEQUENCE [MRNA] (ISOFORM 1)</scope>
</reference>
<reference key="2">
    <citation type="journal article" date="2000" name="Proc. Natl. Acad. Sci. U.S.A.">
        <title>Gene expression profiling in the human hypothalamus-pituitary-adrenal axis and full-length cDNA cloning.</title>
        <authorList>
            <person name="Hu R.-M."/>
            <person name="Han Z.-G."/>
            <person name="Song H.-D."/>
            <person name="Peng Y.-D."/>
            <person name="Huang Q.-H."/>
            <person name="Ren S.-X."/>
            <person name="Gu Y.-J."/>
            <person name="Huang C.-H."/>
            <person name="Li Y.-B."/>
            <person name="Jiang C.-L."/>
            <person name="Fu G."/>
            <person name="Zhang Q.-H."/>
            <person name="Gu B.-W."/>
            <person name="Dai M."/>
            <person name="Mao Y.-F."/>
            <person name="Gao G.-F."/>
            <person name="Rong R."/>
            <person name="Ye M."/>
            <person name="Zhou J."/>
            <person name="Xu S.-H."/>
            <person name="Gu J."/>
            <person name="Shi J.-X."/>
            <person name="Jin W.-R."/>
            <person name="Zhang C.-K."/>
            <person name="Wu T.-M."/>
            <person name="Huang G.-Y."/>
            <person name="Chen Z."/>
            <person name="Chen M.-D."/>
            <person name="Chen J.-L."/>
        </authorList>
    </citation>
    <scope>NUCLEOTIDE SEQUENCE [LARGE SCALE MRNA] (ISOFORM 1)</scope>
    <source>
        <tissue>Pituitary</tissue>
    </source>
</reference>
<reference key="3">
    <citation type="submission" date="1999-12" db="EMBL/GenBank/DDBJ databases">
        <authorList>
            <person name="Peng Y."/>
            <person name="Li Y."/>
            <person name="Tu Y."/>
            <person name="Xu S."/>
            <person name="Han Z."/>
            <person name="Fu G."/>
            <person name="Chen Z."/>
        </authorList>
    </citation>
    <scope>NUCLEOTIDE SEQUENCE [MRNA] (ISOFORM 2)</scope>
    <source>
        <tissue>Pituitary</tissue>
    </source>
</reference>
<reference key="4">
    <citation type="submission" date="2004-06" db="EMBL/GenBank/DDBJ databases">
        <title>Cloning of human full open reading frames in Gateway(TM) system entry vector (pDONR201).</title>
        <authorList>
            <person name="Halleck A."/>
            <person name="Ebert L."/>
            <person name="Mkoundinya M."/>
            <person name="Schick M."/>
            <person name="Eisenstein S."/>
            <person name="Neubert P."/>
            <person name="Kstrang K."/>
            <person name="Schatten R."/>
            <person name="Shen B."/>
            <person name="Henze S."/>
            <person name="Mar W."/>
            <person name="Korn B."/>
            <person name="Zuo D."/>
            <person name="Hu Y."/>
            <person name="LaBaer J."/>
        </authorList>
    </citation>
    <scope>NUCLEOTIDE SEQUENCE [LARGE SCALE MRNA] (ISOFORM 1)</scope>
</reference>
<reference key="5">
    <citation type="journal article" date="2004" name="Genome Res.">
        <title>The status, quality, and expansion of the NIH full-length cDNA project: the Mammalian Gene Collection (MGC).</title>
        <authorList>
            <consortium name="The MGC Project Team"/>
        </authorList>
    </citation>
    <scope>NUCLEOTIDE SEQUENCE [LARGE SCALE MRNA] (ISOFORM 1)</scope>
    <source>
        <tissue>Skeletal muscle</tissue>
    </source>
</reference>
<reference key="6">
    <citation type="journal article" date="1995" name="Mol. Endocrinol.">
        <title>Two classes of proteins dependent on either the presence or absence of thyroid hormone for interaction with the thyroid hormone receptor.</title>
        <authorList>
            <person name="Lee J.W."/>
            <person name="Choi H.-S."/>
            <person name="Gyuris J."/>
            <person name="Brent R."/>
            <person name="Moore D.D."/>
        </authorList>
    </citation>
    <scope>NUCLEOTIDE SEQUENCE [MRNA] OF 4-236 (ISOFORM 1)</scope>
</reference>
<reference key="7">
    <citation type="journal article" date="1999" name="Mol. Cell. Biol.">
        <title>Alien, a highly conserved protein with characteristics of a corepressor for members of the nuclear hormone receptor superfamily.</title>
        <authorList>
            <person name="Dressel U."/>
            <person name="Thormeyer D."/>
            <person name="Altincicek B."/>
            <person name="Paululat A."/>
            <person name="Eggert M."/>
            <person name="Schneider S."/>
            <person name="Tenbaum S.P."/>
            <person name="Renkawitz R."/>
            <person name="Baniahmad A."/>
        </authorList>
    </citation>
    <scope>NUCLEOTIDE SEQUENCE [MRNA] OF 4-443 (ISOFORM 1)</scope>
    <scope>SUBCELLULAR LOCATION</scope>
    <scope>INTERACTION WITH NR2F1</scope>
</reference>
<reference key="8">
    <citation type="journal article" date="1998" name="FASEB J.">
        <title>A novel protein complex involved in signal transduction possessing similarities to 26S proteasome subunits.</title>
        <authorList>
            <person name="Seeger M."/>
            <person name="Kraft R."/>
            <person name="Ferrell K."/>
            <person name="Bech-Otschir D."/>
            <person name="Dumdey R."/>
            <person name="Schade R."/>
            <person name="Gordon C."/>
            <person name="Naumann M."/>
            <person name="Dubiel W."/>
        </authorList>
    </citation>
    <scope>PARTIAL PROTEIN SEQUENCE</scope>
    <scope>FUNCTION</scope>
    <scope>SUBCELLULAR LOCATION</scope>
</reference>
<reference key="9">
    <citation type="journal article" date="2000" name="J. Biol. Chem.">
        <title>Interaction of the corepressor Alien with DAX-1 is abrogated by mutations of DAX-1 involved in adrenal hypoplasia congenita.</title>
        <authorList>
            <person name="Altincicek B."/>
            <person name="Tenbaum S.P."/>
            <person name="Dressel U."/>
            <person name="Thormeyer D."/>
            <person name="Renkawitz R."/>
            <person name="Baniahmad A."/>
        </authorList>
    </citation>
    <scope>INTERACTION WITH NR0B1</scope>
</reference>
<reference key="10">
    <citation type="journal article" date="2000" name="J. Biol. Chem.">
        <title>Interaction between interferon consensus sequence-binding protein and COP9/signalosome subunit CSN2 (Trip15). A possible link between interferon regulatory factor signaling and the COP9/signalosome.</title>
        <authorList>
            <person name="Cohen H."/>
            <person name="Azriel A."/>
            <person name="Cohen T."/>
            <person name="Meraro D."/>
            <person name="Hashmueli S."/>
            <person name="Bech-Otschir D."/>
            <person name="Kraft R."/>
            <person name="Dubiel W."/>
            <person name="Levi B.Z."/>
        </authorList>
    </citation>
    <scope>INTERACTION WITH IRF8/ICSBP1</scope>
</reference>
<reference key="11">
    <citation type="journal article" date="2001" name="EMBO J.">
        <title>COP9 signalosome-specific phosphorylation targets p53 to degradation by the ubiquitin system.</title>
        <authorList>
            <person name="Bech-Otschir D."/>
            <person name="Kraft R."/>
            <person name="Huang X."/>
            <person name="Henklein P."/>
            <person name="Kapelari B."/>
            <person name="Pollmann C."/>
            <person name="Dubiel W."/>
        </authorList>
    </citation>
    <scope>FUNCTION</scope>
</reference>
<reference key="12">
    <citation type="journal article" date="2001" name="Science">
        <title>Promotion of NEDD-CUL1 conjugate cleavage by COP9 signalosome.</title>
        <authorList>
            <person name="Lyapina S."/>
            <person name="Cope G."/>
            <person name="Shevchenko A."/>
            <person name="Serino G."/>
            <person name="Tsuge T."/>
            <person name="Zhou C."/>
            <person name="Wolf D.A."/>
            <person name="Wei N."/>
            <person name="Shevchenko A."/>
            <person name="Deshaies R.J."/>
        </authorList>
    </citation>
    <scope>FUNCTION</scope>
    <scope>COMPOSITION OF THE CSN COMPLEX</scope>
    <scope>INTERACTION WITH CUL1</scope>
</reference>
<reference key="13">
    <citation type="journal article" date="2003" name="Cell">
        <title>The ubiquitin ligase activity in the DDB2 and CSA complexes is differentially regulated by the COP9 signalosome in response to DNA damage.</title>
        <authorList>
            <person name="Groisman R."/>
            <person name="Polanowska J."/>
            <person name="Kuraoka I."/>
            <person name="Sawada J."/>
            <person name="Saijo M."/>
            <person name="Drapkin R."/>
            <person name="Kisselev A.F."/>
            <person name="Tanaka K."/>
            <person name="Nakatani Y."/>
        </authorList>
    </citation>
    <scope>FUNCTION</scope>
</reference>
<reference key="14">
    <citation type="journal article" date="2003" name="EMBO J.">
        <title>Protein kinase CK2 and protein kinase D are associated with the COP9 signalosome.</title>
        <authorList>
            <person name="Uhle S."/>
            <person name="Medalia O."/>
            <person name="Waldron R."/>
            <person name="Dumdey R."/>
            <person name="Henklein P."/>
            <person name="Bech-Otschir D."/>
            <person name="Huang X."/>
            <person name="Berse M."/>
            <person name="Sperling J."/>
            <person name="Schade R."/>
            <person name="Dubiel W."/>
        </authorList>
    </citation>
    <scope>FUNCTION</scope>
    <scope>PHOSPHORYLATION</scope>
</reference>
<reference key="15">
    <citation type="journal article" date="2008" name="J. Proteome Res.">
        <title>Characterization of the human COP9 signalosome complex using affinity purification and mass spectrometry.</title>
        <authorList>
            <person name="Fang L."/>
            <person name="Wang X."/>
            <person name="Yamoah K."/>
            <person name="Chen P.L."/>
            <person name="Pan Z.Q."/>
            <person name="Huang L."/>
        </authorList>
    </citation>
    <scope>IDENTIFICATION IN THE CSN COMPLEX</scope>
</reference>
<reference key="16">
    <citation type="journal article" date="2011" name="BMC Syst. Biol.">
        <title>Initial characterization of the human central proteome.</title>
        <authorList>
            <person name="Burkard T.R."/>
            <person name="Planyavsky M."/>
            <person name="Kaupe I."/>
            <person name="Breitwieser F.P."/>
            <person name="Buerckstuemmer T."/>
            <person name="Bennett K.L."/>
            <person name="Superti-Furga G."/>
            <person name="Colinge J."/>
        </authorList>
    </citation>
    <scope>IDENTIFICATION BY MASS SPECTROMETRY [LARGE SCALE ANALYSIS]</scope>
</reference>
<reference key="17">
    <citation type="journal article" date="2014" name="J. Proteomics">
        <title>An enzyme assisted RP-RPLC approach for in-depth analysis of human liver phosphoproteome.</title>
        <authorList>
            <person name="Bian Y."/>
            <person name="Song C."/>
            <person name="Cheng K."/>
            <person name="Dong M."/>
            <person name="Wang F."/>
            <person name="Huang J."/>
            <person name="Sun D."/>
            <person name="Wang L."/>
            <person name="Ye M."/>
            <person name="Zou H."/>
        </authorList>
    </citation>
    <scope>IDENTIFICATION BY MASS SPECTROMETRY [LARGE SCALE ANALYSIS]</scope>
    <source>
        <tissue>Liver</tissue>
    </source>
</reference>
<reference key="18">
    <citation type="journal article" date="2015" name="Cell Rep.">
        <title>CSNAP is a stoichiometric subunit of the COP9 signalosome.</title>
        <authorList>
            <person name="Rozen S."/>
            <person name="Fuezesi-Levi M.G."/>
            <person name="Ben-Nissan G."/>
            <person name="Mizrachi L."/>
            <person name="Gabashvili A."/>
            <person name="Levin Y."/>
            <person name="Ben-Dor S."/>
            <person name="Eisenstein M."/>
            <person name="Sharon M."/>
        </authorList>
    </citation>
    <scope>COMPOSITION OF THE CSN COMPLEX</scope>
</reference>
<name>CSN2_HUMAN</name>
<protein>
    <recommendedName>
        <fullName>COP9 signalosome complex subunit 2</fullName>
        <shortName>SGN2</shortName>
        <shortName>Signalosome subunit 2</shortName>
    </recommendedName>
    <alternativeName>
        <fullName>Alien homolog</fullName>
    </alternativeName>
    <alternativeName>
        <fullName>JAB1-containing signalosome subunit 2</fullName>
    </alternativeName>
    <alternativeName>
        <fullName>Thyroid receptor-interacting protein 15</fullName>
        <shortName>TR-interacting protein 15</shortName>
        <shortName>TRIP-15</shortName>
    </alternativeName>
</protein>
<organism>
    <name type="scientific">Homo sapiens</name>
    <name type="common">Human</name>
    <dbReference type="NCBI Taxonomy" id="9606"/>
    <lineage>
        <taxon>Eukaryota</taxon>
        <taxon>Metazoa</taxon>
        <taxon>Chordata</taxon>
        <taxon>Craniata</taxon>
        <taxon>Vertebrata</taxon>
        <taxon>Euteleostomi</taxon>
        <taxon>Mammalia</taxon>
        <taxon>Eutheria</taxon>
        <taxon>Euarchontoglires</taxon>
        <taxon>Primates</taxon>
        <taxon>Haplorrhini</taxon>
        <taxon>Catarrhini</taxon>
        <taxon>Hominidae</taxon>
        <taxon>Homo</taxon>
    </lineage>
</organism>
<gene>
    <name type="primary">COPS2</name>
    <name type="synonym">CSN2</name>
    <name type="synonym">TRIP15</name>
</gene>
<feature type="chain" id="PRO_0000120968" description="COP9 signalosome complex subunit 2">
    <location>
        <begin position="1"/>
        <end position="443"/>
    </location>
</feature>
<feature type="domain" description="PCI" evidence="3">
    <location>
        <begin position="254"/>
        <end position="416"/>
    </location>
</feature>
<feature type="region of interest" description="Mediates interaction with NIF3L1" evidence="2">
    <location>
        <begin position="1"/>
        <end position="275"/>
    </location>
</feature>
<feature type="splice variant" id="VSP_011884" description="In isoform 2." evidence="14">
    <original>Q</original>
    <variation>QNSDFLCQ</variation>
    <location>
        <position position="124"/>
    </location>
</feature>
<feature type="sequence conflict" description="In Ref. 3; CAG46860." evidence="15" ref="3">
    <original>Y</original>
    <variation>N</variation>
    <location>
        <position position="36"/>
    </location>
</feature>
<feature type="sequence conflict" description="In Ref. 2; AAD43026." evidence="15" ref="2">
    <original>T</original>
    <variation>A</variation>
    <location>
        <position position="151"/>
    </location>
</feature>
<feature type="sequence conflict" description="In Ref. 3; CAG46860." evidence="15" ref="3">
    <original>N</original>
    <variation>T</variation>
    <location>
        <position position="211"/>
    </location>
</feature>
<feature type="sequence conflict" description="In Ref. 7." evidence="15" ref="7">
    <original>R</original>
    <variation>Q</variation>
    <location>
        <position position="352"/>
    </location>
</feature>
<feature type="sequence conflict" description="In Ref. 7." evidence="15" ref="7">
    <original>C</original>
    <variation>S</variation>
    <location>
        <position position="392"/>
    </location>
</feature>
<feature type="helix" evidence="16">
    <location>
        <begin position="34"/>
        <end position="42"/>
    </location>
</feature>
<feature type="helix" evidence="16">
    <location>
        <begin position="47"/>
        <end position="60"/>
    </location>
</feature>
<feature type="helix" evidence="16">
    <location>
        <begin position="65"/>
        <end position="82"/>
    </location>
</feature>
<feature type="helix" evidence="16">
    <location>
        <begin position="85"/>
        <end position="101"/>
    </location>
</feature>
<feature type="helix" evidence="16">
    <location>
        <begin position="105"/>
        <end position="119"/>
    </location>
</feature>
<feature type="helix" evidence="16">
    <location>
        <begin position="125"/>
        <end position="139"/>
    </location>
</feature>
<feature type="helix" evidence="16">
    <location>
        <begin position="147"/>
        <end position="162"/>
    </location>
</feature>
<accession>P61201</accession>
<accession>O88950</accession>
<accession>Q15647</accession>
<accession>Q6FGP4</accession>
<accession>Q9BY54</accession>
<accession>Q9R249</accession>
<accession>Q9UNI2</accession>
<accession>Q9UNQ5</accession>
<keyword id="KW-0002">3D-structure</keyword>
<keyword id="KW-0025">Alternative splicing</keyword>
<keyword id="KW-0963">Cytoplasm</keyword>
<keyword id="KW-0903">Direct protein sequencing</keyword>
<keyword id="KW-0539">Nucleus</keyword>
<keyword id="KW-0597">Phosphoprotein</keyword>
<keyword id="KW-1267">Proteomics identification</keyword>
<keyword id="KW-1185">Reference proteome</keyword>
<keyword id="KW-0736">Signalosome</keyword>
<evidence type="ECO:0000250" key="1">
    <source>
        <dbReference type="UniProtKB" id="P61202"/>
    </source>
</evidence>
<evidence type="ECO:0000250" key="2">
    <source>
        <dbReference type="UniProtKB" id="P61203"/>
    </source>
</evidence>
<evidence type="ECO:0000255" key="3">
    <source>
        <dbReference type="PROSITE-ProRule" id="PRU01185"/>
    </source>
</evidence>
<evidence type="ECO:0000269" key="4">
    <source>
    </source>
</evidence>
<evidence type="ECO:0000269" key="5">
    <source>
    </source>
</evidence>
<evidence type="ECO:0000269" key="6">
    <source>
    </source>
</evidence>
<evidence type="ECO:0000269" key="7">
    <source>
    </source>
</evidence>
<evidence type="ECO:0000269" key="8">
    <source>
    </source>
</evidence>
<evidence type="ECO:0000269" key="9">
    <source>
    </source>
</evidence>
<evidence type="ECO:0000269" key="10">
    <source>
    </source>
</evidence>
<evidence type="ECO:0000269" key="11">
    <source>
    </source>
</evidence>
<evidence type="ECO:0000269" key="12">
    <source>
    </source>
</evidence>
<evidence type="ECO:0000269" key="13">
    <source>
    </source>
</evidence>
<evidence type="ECO:0000303" key="14">
    <source ref="3"/>
</evidence>
<evidence type="ECO:0000305" key="15"/>
<evidence type="ECO:0007829" key="16">
    <source>
        <dbReference type="PDB" id="6A73"/>
    </source>
</evidence>
<proteinExistence type="evidence at protein level"/>
<dbReference type="EMBL" id="AF084260">
    <property type="protein sequence ID" value="AAC34122.1"/>
    <property type="molecule type" value="mRNA"/>
</dbReference>
<dbReference type="EMBL" id="AF100762">
    <property type="protein sequence ID" value="AAD43026.1"/>
    <property type="molecule type" value="mRNA"/>
</dbReference>
<dbReference type="EMBL" id="AF212227">
    <property type="protein sequence ID" value="AAK26250.1"/>
    <property type="molecule type" value="mRNA"/>
</dbReference>
<dbReference type="EMBL" id="CR542063">
    <property type="protein sequence ID" value="CAG46860.1"/>
    <property type="molecule type" value="mRNA"/>
</dbReference>
<dbReference type="EMBL" id="BC012629">
    <property type="protein sequence ID" value="AAH12629.1"/>
    <property type="molecule type" value="mRNA"/>
</dbReference>
<dbReference type="EMBL" id="L40388">
    <property type="protein sequence ID" value="AAC41734.1"/>
    <property type="molecule type" value="mRNA"/>
</dbReference>
<dbReference type="EMBL" id="AF120268">
    <property type="protein sequence ID" value="AAD30269.1"/>
    <property type="status" value="ALT_FRAME"/>
    <property type="molecule type" value="mRNA"/>
</dbReference>
<dbReference type="CCDS" id="CCDS32235.1">
    <molecule id="P61201-1"/>
</dbReference>
<dbReference type="CCDS" id="CCDS45257.1">
    <molecule id="P61201-2"/>
</dbReference>
<dbReference type="RefSeq" id="NP_001137359.1">
    <molecule id="P61201-2"/>
    <property type="nucleotide sequence ID" value="NM_001143887.2"/>
</dbReference>
<dbReference type="RefSeq" id="NP_004227.1">
    <molecule id="P61201-1"/>
    <property type="nucleotide sequence ID" value="NM_004236.4"/>
</dbReference>
<dbReference type="PDB" id="4D10">
    <property type="method" value="X-ray"/>
    <property type="resolution" value="3.80 A"/>
    <property type="chains" value="B/J=1-443"/>
</dbReference>
<dbReference type="PDB" id="4D18">
    <property type="method" value="X-ray"/>
    <property type="resolution" value="4.08 A"/>
    <property type="chains" value="B/J=1-443"/>
</dbReference>
<dbReference type="PDB" id="4WSN">
    <property type="method" value="X-ray"/>
    <property type="resolution" value="5.50 A"/>
    <property type="chains" value="B/J/R/Z/h/p=1-443"/>
</dbReference>
<dbReference type="PDB" id="6A73">
    <property type="method" value="X-ray"/>
    <property type="resolution" value="2.45 A"/>
    <property type="chains" value="A/B=29-162"/>
</dbReference>
<dbReference type="PDB" id="6R6H">
    <property type="method" value="EM"/>
    <property type="resolution" value="8.40 A"/>
    <property type="chains" value="B=1-443"/>
</dbReference>
<dbReference type="PDB" id="6R7F">
    <property type="method" value="EM"/>
    <property type="resolution" value="8.20 A"/>
    <property type="chains" value="B=1-443"/>
</dbReference>
<dbReference type="PDB" id="6R7H">
    <property type="method" value="EM"/>
    <property type="resolution" value="8.80 A"/>
    <property type="chains" value="B=30-443"/>
</dbReference>
<dbReference type="PDB" id="6R7I">
    <property type="method" value="EM"/>
    <property type="resolution" value="5.90 A"/>
    <property type="chains" value="B=1-443"/>
</dbReference>
<dbReference type="PDB" id="6R7N">
    <property type="method" value="EM"/>
    <property type="resolution" value="6.50 A"/>
    <property type="chains" value="B=1-443"/>
</dbReference>
<dbReference type="PDB" id="8H38">
    <property type="method" value="EM"/>
    <property type="resolution" value="4.25 A"/>
    <property type="chains" value="B=1-443"/>
</dbReference>
<dbReference type="PDB" id="8H3A">
    <property type="method" value="EM"/>
    <property type="resolution" value="7.51 A"/>
    <property type="chains" value="B=1-443"/>
</dbReference>
<dbReference type="PDB" id="8H3F">
    <property type="method" value="EM"/>
    <property type="resolution" value="6.73 A"/>
    <property type="chains" value="B=1-443"/>
</dbReference>
<dbReference type="PDBsum" id="4D10"/>
<dbReference type="PDBsum" id="4D18"/>
<dbReference type="PDBsum" id="4WSN"/>
<dbReference type="PDBsum" id="6A73"/>
<dbReference type="PDBsum" id="6R6H"/>
<dbReference type="PDBsum" id="6R7F"/>
<dbReference type="PDBsum" id="6R7H"/>
<dbReference type="PDBsum" id="6R7I"/>
<dbReference type="PDBsum" id="6R7N"/>
<dbReference type="PDBsum" id="8H38"/>
<dbReference type="PDBsum" id="8H3A"/>
<dbReference type="PDBsum" id="8H3F"/>
<dbReference type="EMDB" id="EMD-3313"/>
<dbReference type="EMDB" id="EMD-3314"/>
<dbReference type="EMDB" id="EMD-3315"/>
<dbReference type="EMDB" id="EMD-3316"/>
<dbReference type="EMDB" id="EMD-3317"/>
<dbReference type="EMDB" id="EMD-3401"/>
<dbReference type="EMDB" id="EMD-34455"/>
<dbReference type="EMDB" id="EMD-34462"/>
<dbReference type="EMDB" id="EMD-34467"/>
<dbReference type="EMDB" id="EMD-4736"/>
<dbReference type="EMDB" id="EMD-4739"/>
<dbReference type="EMDB" id="EMD-4741"/>
<dbReference type="EMDB" id="EMD-4742"/>
<dbReference type="EMDB" id="EMD-4744"/>
<dbReference type="SMR" id="P61201"/>
<dbReference type="BioGRID" id="114729">
    <property type="interactions" value="266"/>
</dbReference>
<dbReference type="ComplexPortal" id="CPX-1870">
    <property type="entry name" value="COP9 signalosome variant 1"/>
</dbReference>
<dbReference type="ComplexPortal" id="CPX-1871">
    <property type="entry name" value="COP9 signalosome variant 2"/>
</dbReference>
<dbReference type="CORUM" id="P61201"/>
<dbReference type="DIP" id="DIP-42076N"/>
<dbReference type="FunCoup" id="P61201">
    <property type="interactions" value="5018"/>
</dbReference>
<dbReference type="IntAct" id="P61201">
    <property type="interactions" value="93"/>
</dbReference>
<dbReference type="MINT" id="P61201"/>
<dbReference type="STRING" id="9606.ENSP00000299259"/>
<dbReference type="GlyConnect" id="2031">
    <property type="glycosylation" value="1 N-Linked glycan (1 site)"/>
</dbReference>
<dbReference type="GlyCosmos" id="P61201">
    <property type="glycosylation" value="1 site, 2 glycans"/>
</dbReference>
<dbReference type="GlyGen" id="P61201">
    <property type="glycosylation" value="2 sites, 2 N-linked glycans (1 site), 1 O-linked glycan (1 site)"/>
</dbReference>
<dbReference type="iPTMnet" id="P61201"/>
<dbReference type="MetOSite" id="P61201"/>
<dbReference type="PhosphoSitePlus" id="P61201"/>
<dbReference type="SwissPalm" id="P61201"/>
<dbReference type="BioMuta" id="COPS2"/>
<dbReference type="DMDM" id="47117681"/>
<dbReference type="jPOST" id="P61201"/>
<dbReference type="MassIVE" id="P61201"/>
<dbReference type="PaxDb" id="9606-ENSP00000299259"/>
<dbReference type="PeptideAtlas" id="P61201"/>
<dbReference type="ProteomicsDB" id="57272">
    <molecule id="P61201-1"/>
</dbReference>
<dbReference type="ProteomicsDB" id="57273">
    <molecule id="P61201-2"/>
</dbReference>
<dbReference type="Pumba" id="P61201"/>
<dbReference type="Antibodypedia" id="12106">
    <property type="antibodies" value="415 antibodies from 38 providers"/>
</dbReference>
<dbReference type="DNASU" id="9318"/>
<dbReference type="Ensembl" id="ENST00000299259.10">
    <molecule id="P61201-2"/>
    <property type="protein sequence ID" value="ENSP00000299259.6"/>
    <property type="gene ID" value="ENSG00000166200.15"/>
</dbReference>
<dbReference type="Ensembl" id="ENST00000388901.10">
    <molecule id="P61201-1"/>
    <property type="protein sequence ID" value="ENSP00000373553.5"/>
    <property type="gene ID" value="ENSG00000166200.15"/>
</dbReference>
<dbReference type="GeneID" id="9318"/>
<dbReference type="KEGG" id="hsa:9318"/>
<dbReference type="MANE-Select" id="ENST00000388901.10">
    <property type="protein sequence ID" value="ENSP00000373553.5"/>
    <property type="RefSeq nucleotide sequence ID" value="NM_004236.4"/>
    <property type="RefSeq protein sequence ID" value="NP_004227.1"/>
</dbReference>
<dbReference type="UCSC" id="uc001zxf.4">
    <molecule id="P61201-1"/>
    <property type="organism name" value="human"/>
</dbReference>
<dbReference type="AGR" id="HGNC:30747"/>
<dbReference type="CTD" id="9318"/>
<dbReference type="DisGeNET" id="9318"/>
<dbReference type="GeneCards" id="COPS2"/>
<dbReference type="HGNC" id="HGNC:30747">
    <property type="gene designation" value="COPS2"/>
</dbReference>
<dbReference type="HPA" id="ENSG00000166200">
    <property type="expression patterns" value="Low tissue specificity"/>
</dbReference>
<dbReference type="MIM" id="604508">
    <property type="type" value="gene"/>
</dbReference>
<dbReference type="neXtProt" id="NX_P61201"/>
<dbReference type="OpenTargets" id="ENSG00000166200"/>
<dbReference type="PharmGKB" id="PA134952445"/>
<dbReference type="VEuPathDB" id="HostDB:ENSG00000166200"/>
<dbReference type="eggNOG" id="KOG1464">
    <property type="taxonomic scope" value="Eukaryota"/>
</dbReference>
<dbReference type="GeneTree" id="ENSGT00530000063301"/>
<dbReference type="HOGENOM" id="CLU_028981_0_1_1"/>
<dbReference type="InParanoid" id="P61201"/>
<dbReference type="OMA" id="SEENWKD"/>
<dbReference type="OrthoDB" id="194139at2759"/>
<dbReference type="PAN-GO" id="P61201">
    <property type="GO annotations" value="2 GO annotations based on evolutionary models"/>
</dbReference>
<dbReference type="PhylomeDB" id="P61201"/>
<dbReference type="TreeFam" id="TF105738"/>
<dbReference type="PathwayCommons" id="P61201"/>
<dbReference type="Reactome" id="R-HSA-5696394">
    <property type="pathway name" value="DNA Damage Recognition in GG-NER"/>
</dbReference>
<dbReference type="Reactome" id="R-HSA-6781823">
    <property type="pathway name" value="Formation of TC-NER Pre-Incision Complex"/>
</dbReference>
<dbReference type="Reactome" id="R-HSA-8856825">
    <property type="pathway name" value="Cargo recognition for clathrin-mediated endocytosis"/>
</dbReference>
<dbReference type="Reactome" id="R-HSA-8951664">
    <property type="pathway name" value="Neddylation"/>
</dbReference>
<dbReference type="Reactome" id="R-HSA-9013422">
    <property type="pathway name" value="RHOBTB1 GTPase cycle"/>
</dbReference>
<dbReference type="SignaLink" id="P61201"/>
<dbReference type="SIGNOR" id="P61201"/>
<dbReference type="BioGRID-ORCS" id="9318">
    <property type="hits" value="735 hits in 1190 CRISPR screens"/>
</dbReference>
<dbReference type="CD-CODE" id="8C2F96ED">
    <property type="entry name" value="Centrosome"/>
</dbReference>
<dbReference type="CD-CODE" id="91857CE7">
    <property type="entry name" value="Nucleolus"/>
</dbReference>
<dbReference type="ChiTaRS" id="COPS2">
    <property type="organism name" value="human"/>
</dbReference>
<dbReference type="EvolutionaryTrace" id="P61201"/>
<dbReference type="GeneWiki" id="COPS2"/>
<dbReference type="GenomeRNAi" id="9318"/>
<dbReference type="Pharos" id="P61201">
    <property type="development level" value="Tbio"/>
</dbReference>
<dbReference type="PRO" id="PR:P61201"/>
<dbReference type="Proteomes" id="UP000005640">
    <property type="component" value="Chromosome 15"/>
</dbReference>
<dbReference type="RNAct" id="P61201">
    <property type="molecule type" value="protein"/>
</dbReference>
<dbReference type="Bgee" id="ENSG00000166200">
    <property type="expression patterns" value="Expressed in cartilage tissue and 214 other cell types or tissues"/>
</dbReference>
<dbReference type="ExpressionAtlas" id="P61201">
    <property type="expression patterns" value="baseline and differential"/>
</dbReference>
<dbReference type="GO" id="GO:0008180">
    <property type="term" value="C:COP9 signalosome"/>
    <property type="evidence" value="ECO:0000314"/>
    <property type="project" value="UniProtKB"/>
</dbReference>
<dbReference type="GO" id="GO:0005737">
    <property type="term" value="C:cytoplasm"/>
    <property type="evidence" value="ECO:0000314"/>
    <property type="project" value="UniProtKB"/>
</dbReference>
<dbReference type="GO" id="GO:0005829">
    <property type="term" value="C:cytosol"/>
    <property type="evidence" value="ECO:0000304"/>
    <property type="project" value="Reactome"/>
</dbReference>
<dbReference type="GO" id="GO:0005654">
    <property type="term" value="C:nucleoplasm"/>
    <property type="evidence" value="ECO:0000304"/>
    <property type="project" value="Reactome"/>
</dbReference>
<dbReference type="GO" id="GO:0005634">
    <property type="term" value="C:nucleus"/>
    <property type="evidence" value="ECO:0000314"/>
    <property type="project" value="ComplexPortal"/>
</dbReference>
<dbReference type="GO" id="GO:0003714">
    <property type="term" value="F:transcription corepressor activity"/>
    <property type="evidence" value="ECO:0007669"/>
    <property type="project" value="Ensembl"/>
</dbReference>
<dbReference type="GO" id="GO:0001833">
    <property type="term" value="P:inner cell mass cell proliferation"/>
    <property type="evidence" value="ECO:0007669"/>
    <property type="project" value="Ensembl"/>
</dbReference>
<dbReference type="GO" id="GO:0000122">
    <property type="term" value="P:negative regulation of transcription by RNA polymerase II"/>
    <property type="evidence" value="ECO:0000250"/>
    <property type="project" value="UniProtKB"/>
</dbReference>
<dbReference type="GO" id="GO:0030182">
    <property type="term" value="P:neuron differentiation"/>
    <property type="evidence" value="ECO:0007669"/>
    <property type="project" value="Ensembl"/>
</dbReference>
<dbReference type="GO" id="GO:0000338">
    <property type="term" value="P:protein deneddylation"/>
    <property type="evidence" value="ECO:0000314"/>
    <property type="project" value="UniProtKB"/>
</dbReference>
<dbReference type="GO" id="GO:0045116">
    <property type="term" value="P:protein neddylation"/>
    <property type="evidence" value="ECO:0000303"/>
    <property type="project" value="ComplexPortal"/>
</dbReference>
<dbReference type="GO" id="GO:0006468">
    <property type="term" value="P:protein phosphorylation"/>
    <property type="evidence" value="ECO:0000314"/>
    <property type="project" value="UniProtKB"/>
</dbReference>
<dbReference type="GO" id="GO:2000434">
    <property type="term" value="P:regulation of protein neddylation"/>
    <property type="evidence" value="ECO:0000303"/>
    <property type="project" value="ComplexPortal"/>
</dbReference>
<dbReference type="GO" id="GO:0007165">
    <property type="term" value="P:signal transduction"/>
    <property type="evidence" value="ECO:0000303"/>
    <property type="project" value="UniProtKB"/>
</dbReference>
<dbReference type="GO" id="GO:0035914">
    <property type="term" value="P:skeletal muscle cell differentiation"/>
    <property type="evidence" value="ECO:0007669"/>
    <property type="project" value="Ensembl"/>
</dbReference>
<dbReference type="GO" id="GO:0006366">
    <property type="term" value="P:transcription by RNA polymerase II"/>
    <property type="evidence" value="ECO:0000304"/>
    <property type="project" value="UniProtKB"/>
</dbReference>
<dbReference type="GO" id="GO:0001834">
    <property type="term" value="P:trophectodermal cell proliferation"/>
    <property type="evidence" value="ECO:0007669"/>
    <property type="project" value="Ensembl"/>
</dbReference>
<dbReference type="FunFam" id="1.25.40.570:FF:000001">
    <property type="entry name" value="Putative cop9 signalosome complex subunit 2"/>
    <property type="match status" value="1"/>
</dbReference>
<dbReference type="Gene3D" id="1.25.40.570">
    <property type="match status" value="1"/>
</dbReference>
<dbReference type="InterPro" id="IPR050871">
    <property type="entry name" value="26S_Proteasome/COP9_Components"/>
</dbReference>
<dbReference type="InterPro" id="IPR000717">
    <property type="entry name" value="PCI_dom"/>
</dbReference>
<dbReference type="InterPro" id="IPR011990">
    <property type="entry name" value="TPR-like_helical_dom_sf"/>
</dbReference>
<dbReference type="InterPro" id="IPR036390">
    <property type="entry name" value="WH_DNA-bd_sf"/>
</dbReference>
<dbReference type="PANTHER" id="PTHR10678">
    <property type="entry name" value="26S PROTEASOME NON-ATPASE REGULATORY SUBUNIT 11/COP9 SIGNALOSOME COMPLEX SUBUNIT 2"/>
    <property type="match status" value="1"/>
</dbReference>
<dbReference type="Pfam" id="PF01399">
    <property type="entry name" value="PCI"/>
    <property type="match status" value="1"/>
</dbReference>
<dbReference type="SMART" id="SM00753">
    <property type="entry name" value="PAM"/>
    <property type="match status" value="1"/>
</dbReference>
<dbReference type="SMART" id="SM00088">
    <property type="entry name" value="PINT"/>
    <property type="match status" value="1"/>
</dbReference>
<dbReference type="SUPFAM" id="SSF48452">
    <property type="entry name" value="TPR-like"/>
    <property type="match status" value="1"/>
</dbReference>
<dbReference type="SUPFAM" id="SSF46785">
    <property type="entry name" value="Winged helix' DNA-binding domain"/>
    <property type="match status" value="1"/>
</dbReference>
<dbReference type="PROSITE" id="PS50250">
    <property type="entry name" value="PCI"/>
    <property type="match status" value="1"/>
</dbReference>